<evidence type="ECO:0000255" key="1">
    <source>
        <dbReference type="HAMAP-Rule" id="MF_00428"/>
    </source>
</evidence>
<name>NQRD_VIBVU</name>
<organism>
    <name type="scientific">Vibrio vulnificus (strain CMCP6)</name>
    <dbReference type="NCBI Taxonomy" id="216895"/>
    <lineage>
        <taxon>Bacteria</taxon>
        <taxon>Pseudomonadati</taxon>
        <taxon>Pseudomonadota</taxon>
        <taxon>Gammaproteobacteria</taxon>
        <taxon>Vibrionales</taxon>
        <taxon>Vibrionaceae</taxon>
        <taxon>Vibrio</taxon>
    </lineage>
</organism>
<comment type="function">
    <text evidence="1">NQR complex catalyzes the reduction of ubiquinone-1 to ubiquinol by two successive reactions, coupled with the transport of Na(+) ions from the cytoplasm to the periplasm. NqrA to NqrE are probably involved in the second step, the conversion of ubisemiquinone to ubiquinol.</text>
</comment>
<comment type="catalytic activity">
    <reaction evidence="1">
        <text>a ubiquinone + n Na(+)(in) + NADH + H(+) = a ubiquinol + n Na(+)(out) + NAD(+)</text>
        <dbReference type="Rhea" id="RHEA:47748"/>
        <dbReference type="Rhea" id="RHEA-COMP:9565"/>
        <dbReference type="Rhea" id="RHEA-COMP:9566"/>
        <dbReference type="ChEBI" id="CHEBI:15378"/>
        <dbReference type="ChEBI" id="CHEBI:16389"/>
        <dbReference type="ChEBI" id="CHEBI:17976"/>
        <dbReference type="ChEBI" id="CHEBI:29101"/>
        <dbReference type="ChEBI" id="CHEBI:57540"/>
        <dbReference type="ChEBI" id="CHEBI:57945"/>
        <dbReference type="EC" id="7.2.1.1"/>
    </reaction>
</comment>
<comment type="subunit">
    <text evidence="1">Composed of six subunits; NqrA, NqrB, NqrC, NqrD, NqrE and NqrF.</text>
</comment>
<comment type="subcellular location">
    <subcellularLocation>
        <location evidence="1">Cell inner membrane</location>
        <topology evidence="1">Multi-pass membrane protein</topology>
    </subcellularLocation>
</comment>
<comment type="similarity">
    <text evidence="1">Belongs to the NqrDE/RnfAE family.</text>
</comment>
<proteinExistence type="inferred from homology"/>
<accession>Q8DBJ3</accession>
<keyword id="KW-0997">Cell inner membrane</keyword>
<keyword id="KW-1003">Cell membrane</keyword>
<keyword id="KW-0406">Ion transport</keyword>
<keyword id="KW-0472">Membrane</keyword>
<keyword id="KW-0520">NAD</keyword>
<keyword id="KW-0915">Sodium</keyword>
<keyword id="KW-0739">Sodium transport</keyword>
<keyword id="KW-1278">Translocase</keyword>
<keyword id="KW-0812">Transmembrane</keyword>
<keyword id="KW-1133">Transmembrane helix</keyword>
<keyword id="KW-0813">Transport</keyword>
<keyword id="KW-0830">Ubiquinone</keyword>
<feature type="chain" id="PRO_0000214244" description="Na(+)-translocating NADH-quinone reductase subunit D">
    <location>
        <begin position="1"/>
        <end position="210"/>
    </location>
</feature>
<feature type="transmembrane region" description="Helical" evidence="1">
    <location>
        <begin position="42"/>
        <end position="62"/>
    </location>
</feature>
<feature type="transmembrane region" description="Helical" evidence="1">
    <location>
        <begin position="72"/>
        <end position="92"/>
    </location>
</feature>
<feature type="transmembrane region" description="Helical" evidence="1">
    <location>
        <begin position="103"/>
        <end position="123"/>
    </location>
</feature>
<feature type="transmembrane region" description="Helical" evidence="1">
    <location>
        <begin position="131"/>
        <end position="151"/>
    </location>
</feature>
<feature type="transmembrane region" description="Helical" evidence="1">
    <location>
        <begin position="178"/>
        <end position="198"/>
    </location>
</feature>
<gene>
    <name evidence="1" type="primary">nqrD</name>
    <name type="ordered locus">VV1_1824</name>
</gene>
<protein>
    <recommendedName>
        <fullName evidence="1">Na(+)-translocating NADH-quinone reductase subunit D</fullName>
        <shortName evidence="1">Na(+)-NQR subunit D</shortName>
        <shortName evidence="1">Na(+)-translocating NQR subunit D</shortName>
        <ecNumber evidence="1">7.2.1.1</ecNumber>
    </recommendedName>
    <alternativeName>
        <fullName evidence="1">NQR complex subunit D</fullName>
    </alternativeName>
    <alternativeName>
        <fullName evidence="1">NQR-1 subunit D</fullName>
    </alternativeName>
</protein>
<sequence length="210" mass="22747">MSSAQNIKKSILAPVLDNNPIALQVLGVCSALAVTTKLETAFVMTLAVTFVTALSNFFVSLIRNHIPNSVRIIVQMAIIASLVIVVDQILKAYLYDISKQLSVFVGLIITNCIVMGRAEAFAMKSAPVPSLIDGIGNGLGYGFVLITVGFFRELFGSGKLFGMEVLPLVNNGGWYQPNGLMLLAPSAFFLIGFMIWAIRTFKPEQVEAKE</sequence>
<reference key="1">
    <citation type="submission" date="2002-12" db="EMBL/GenBank/DDBJ databases">
        <title>Complete genome sequence of Vibrio vulnificus CMCP6.</title>
        <authorList>
            <person name="Rhee J.H."/>
            <person name="Kim S.Y."/>
            <person name="Chung S.S."/>
            <person name="Kim J.J."/>
            <person name="Moon Y.H."/>
            <person name="Jeong H."/>
            <person name="Choy H.E."/>
        </authorList>
    </citation>
    <scope>NUCLEOTIDE SEQUENCE [LARGE SCALE GENOMIC DNA]</scope>
    <source>
        <strain>CMCP6</strain>
    </source>
</reference>
<dbReference type="EC" id="7.2.1.1" evidence="1"/>
<dbReference type="EMBL" id="AE016795">
    <property type="protein sequence ID" value="AAO10230.1"/>
    <property type="molecule type" value="Genomic_DNA"/>
</dbReference>
<dbReference type="RefSeq" id="WP_011079730.1">
    <property type="nucleotide sequence ID" value="NC_004459.3"/>
</dbReference>
<dbReference type="SMR" id="Q8DBJ3"/>
<dbReference type="KEGG" id="vvu:VV1_1824"/>
<dbReference type="HOGENOM" id="CLU_046659_1_1_6"/>
<dbReference type="Proteomes" id="UP000002275">
    <property type="component" value="Chromosome 1"/>
</dbReference>
<dbReference type="GO" id="GO:0005886">
    <property type="term" value="C:plasma membrane"/>
    <property type="evidence" value="ECO:0007669"/>
    <property type="project" value="UniProtKB-SubCell"/>
</dbReference>
<dbReference type="GO" id="GO:0016655">
    <property type="term" value="F:oxidoreductase activity, acting on NAD(P)H, quinone or similar compound as acceptor"/>
    <property type="evidence" value="ECO:0007669"/>
    <property type="project" value="UniProtKB-UniRule"/>
</dbReference>
<dbReference type="GO" id="GO:0006814">
    <property type="term" value="P:sodium ion transport"/>
    <property type="evidence" value="ECO:0007669"/>
    <property type="project" value="UniProtKB-UniRule"/>
</dbReference>
<dbReference type="HAMAP" id="MF_00428">
    <property type="entry name" value="NqrD"/>
    <property type="match status" value="1"/>
</dbReference>
<dbReference type="InterPro" id="IPR011292">
    <property type="entry name" value="NqrD"/>
</dbReference>
<dbReference type="InterPro" id="IPR003667">
    <property type="entry name" value="NqrDE/RnfAE"/>
</dbReference>
<dbReference type="NCBIfam" id="TIGR01939">
    <property type="entry name" value="nqrD"/>
    <property type="match status" value="1"/>
</dbReference>
<dbReference type="NCBIfam" id="NF006777">
    <property type="entry name" value="PRK09292.1"/>
    <property type="match status" value="1"/>
</dbReference>
<dbReference type="NCBIfam" id="NF009070">
    <property type="entry name" value="PRK12405.1"/>
    <property type="match status" value="1"/>
</dbReference>
<dbReference type="PANTHER" id="PTHR30586">
    <property type="entry name" value="ELECTRON TRANSPORT COMPLEX PROTEIN RNFE"/>
    <property type="match status" value="1"/>
</dbReference>
<dbReference type="PANTHER" id="PTHR30586:SF1">
    <property type="entry name" value="NA(+)-TRANSLOCATING NADH-QUINONE REDUCTASE SUBUNIT D"/>
    <property type="match status" value="1"/>
</dbReference>
<dbReference type="Pfam" id="PF02508">
    <property type="entry name" value="Rnf-Nqr"/>
    <property type="match status" value="1"/>
</dbReference>
<dbReference type="PIRSF" id="PIRSF006102">
    <property type="entry name" value="NQR_DE"/>
    <property type="match status" value="1"/>
</dbReference>